<gene>
    <name evidence="5" type="primary">srb-16</name>
    <name evidence="5" type="ORF">F58A6.6</name>
</gene>
<sequence length="342" mass="40001">MDRELIEICKENSATAFSVGYQIVYLIYVVLSVTSIFTCSYFIKTFIWNSTFHPNFKLLLTMYFFAAIFHSFLFTASYLMMIERFLDYQTDCDIHVSMVPYAIVHSSIACCLFCGMLTQVFMVIERLLATIKIESYEHNTSFWHILAYLFFCIVLPLSLLVWAYQDADYNSPVITAISPPKGVEIRLNILYIFCFFLAILALILLQVVRFVNKRRESRIEISLSGRFQIVENIDTTTFISSILIINMIMSVIYIVGTFTLRNFQFDAFINNQPALATVKTIFYLHPLFSFLMPLISSYHLSKMRERRVKRREHLMAIKTKGREGSDAYNQLLHDQWTQHFLK</sequence>
<dbReference type="EMBL" id="BX284602">
    <property type="protein sequence ID" value="CCD65837.1"/>
    <property type="molecule type" value="Genomic_DNA"/>
</dbReference>
<dbReference type="PIR" id="T16496">
    <property type="entry name" value="T16496"/>
</dbReference>
<dbReference type="RefSeq" id="NP_494956.1">
    <property type="nucleotide sequence ID" value="NM_062555.4"/>
</dbReference>
<dbReference type="SMR" id="Q20961"/>
<dbReference type="FunCoup" id="Q20961">
    <property type="interactions" value="4"/>
</dbReference>
<dbReference type="STRING" id="6239.F58A6.6.1"/>
<dbReference type="PaxDb" id="6239-F58A6.6"/>
<dbReference type="EnsemblMetazoa" id="F58A6.6.1">
    <property type="protein sequence ID" value="F58A6.6.1"/>
    <property type="gene ID" value="WBGene00019025"/>
</dbReference>
<dbReference type="GeneID" id="186489"/>
<dbReference type="KEGG" id="cel:CELE_F58A6.6"/>
<dbReference type="UCSC" id="F58A6.6">
    <property type="organism name" value="c. elegans"/>
</dbReference>
<dbReference type="AGR" id="WB:WBGene00019025"/>
<dbReference type="CTD" id="186489"/>
<dbReference type="WormBase" id="F58A6.6">
    <property type="protein sequence ID" value="CE04679"/>
    <property type="gene ID" value="WBGene00019025"/>
    <property type="gene designation" value="srb-16"/>
</dbReference>
<dbReference type="eggNOG" id="ENOG502TG49">
    <property type="taxonomic scope" value="Eukaryota"/>
</dbReference>
<dbReference type="GeneTree" id="ENSGT00970000195867"/>
<dbReference type="HOGENOM" id="CLU_991225_0_0_1"/>
<dbReference type="InParanoid" id="Q20961"/>
<dbReference type="OMA" id="KLLLTMY"/>
<dbReference type="OrthoDB" id="5805206at2759"/>
<dbReference type="PhylomeDB" id="Q20961"/>
<dbReference type="PRO" id="PR:Q20961"/>
<dbReference type="Proteomes" id="UP000001940">
    <property type="component" value="Chromosome II"/>
</dbReference>
<dbReference type="Bgee" id="WBGene00019025">
    <property type="expression patterns" value="Expressed in larva and 3 other cell types or tissues"/>
</dbReference>
<dbReference type="GO" id="GO:0030425">
    <property type="term" value="C:dendrite"/>
    <property type="evidence" value="ECO:0007669"/>
    <property type="project" value="UniProtKB-SubCell"/>
</dbReference>
<dbReference type="GO" id="GO:0043204">
    <property type="term" value="C:perikaryon"/>
    <property type="evidence" value="ECO:0007669"/>
    <property type="project" value="UniProtKB-SubCell"/>
</dbReference>
<dbReference type="GO" id="GO:0005886">
    <property type="term" value="C:plasma membrane"/>
    <property type="evidence" value="ECO:0007669"/>
    <property type="project" value="UniProtKB-SubCell"/>
</dbReference>
<dbReference type="GO" id="GO:0004930">
    <property type="term" value="F:G protein-coupled receptor activity"/>
    <property type="evidence" value="ECO:0007669"/>
    <property type="project" value="UniProtKB-KW"/>
</dbReference>
<dbReference type="GO" id="GO:0007606">
    <property type="term" value="P:sensory perception of chemical stimulus"/>
    <property type="evidence" value="ECO:0007669"/>
    <property type="project" value="InterPro"/>
</dbReference>
<dbReference type="InterPro" id="IPR000344">
    <property type="entry name" value="7TM_GPCR_serpentine_rcpt_Sra"/>
</dbReference>
<dbReference type="InterPro" id="IPR019408">
    <property type="entry name" value="7TM_GPCR_serpentine_rcpt_Srab"/>
</dbReference>
<dbReference type="InterPro" id="IPR002184">
    <property type="entry name" value="7TM_GPCR_serpentine_rcpt_Srb"/>
</dbReference>
<dbReference type="PANTHER" id="PTHR31216">
    <property type="entry name" value="SERPENTINE RECEPTOR CLASS BETA-1-RELATED-RELATED"/>
    <property type="match status" value="1"/>
</dbReference>
<dbReference type="PANTHER" id="PTHR31216:SF11">
    <property type="entry name" value="SERPENTINE RECEPTOR CLASS BETA-16-RELATED"/>
    <property type="match status" value="1"/>
</dbReference>
<dbReference type="Pfam" id="PF10292">
    <property type="entry name" value="7TM_GPCR_Srab"/>
    <property type="match status" value="1"/>
</dbReference>
<dbReference type="PRINTS" id="PR00697">
    <property type="entry name" value="TMPROTEINSRA"/>
</dbReference>
<feature type="chain" id="PRO_0000447260" description="Serpentine receptor class beta-16">
    <location>
        <begin position="1"/>
        <end position="342"/>
    </location>
</feature>
<feature type="topological domain" description="Extracellular" evidence="3">
    <location>
        <begin position="1"/>
        <end position="22"/>
    </location>
</feature>
<feature type="transmembrane region" description="Helical; Name=1" evidence="1">
    <location>
        <begin position="23"/>
        <end position="43"/>
    </location>
</feature>
<feature type="topological domain" description="Cytoplasmic" evidence="3">
    <location>
        <begin position="44"/>
        <end position="61"/>
    </location>
</feature>
<feature type="transmembrane region" description="Helical; Name=2" evidence="1">
    <location>
        <begin position="62"/>
        <end position="82"/>
    </location>
</feature>
<feature type="topological domain" description="Extracellular" evidence="3">
    <location>
        <begin position="83"/>
        <end position="102"/>
    </location>
</feature>
<feature type="transmembrane region" description="Helical; Name=3" evidence="1">
    <location>
        <begin position="103"/>
        <end position="123"/>
    </location>
</feature>
<feature type="topological domain" description="Cytoplasmic" evidence="3">
    <location>
        <begin position="124"/>
        <end position="141"/>
    </location>
</feature>
<feature type="transmembrane region" description="Helical; Name=4" evidence="1">
    <location>
        <begin position="142"/>
        <end position="162"/>
    </location>
</feature>
<feature type="topological domain" description="Extracellular" evidence="3">
    <location>
        <begin position="163"/>
        <end position="187"/>
    </location>
</feature>
<feature type="transmembrane region" description="Helical; Name=5" evidence="1">
    <location>
        <begin position="188"/>
        <end position="208"/>
    </location>
</feature>
<feature type="topological domain" description="Cytoplasmic" evidence="3">
    <location>
        <begin position="209"/>
        <end position="237"/>
    </location>
</feature>
<feature type="transmembrane region" description="Helical; Name=6" evidence="1">
    <location>
        <begin position="238"/>
        <end position="258"/>
    </location>
</feature>
<feature type="topological domain" description="Extracellular" evidence="3">
    <location>
        <begin position="259"/>
        <end position="274"/>
    </location>
</feature>
<feature type="transmembrane region" description="Helical; Name=7" evidence="1">
    <location>
        <begin position="275"/>
        <end position="295"/>
    </location>
</feature>
<feature type="topological domain" description="Cytoplasmic" evidence="3">
    <location>
        <begin position="296"/>
        <end position="342"/>
    </location>
</feature>
<keyword id="KW-1003">Cell membrane</keyword>
<keyword id="KW-0966">Cell projection</keyword>
<keyword id="KW-0297">G-protein coupled receptor</keyword>
<keyword id="KW-0472">Membrane</keyword>
<keyword id="KW-0675">Receptor</keyword>
<keyword id="KW-1185">Reference proteome</keyword>
<keyword id="KW-0807">Transducer</keyword>
<keyword id="KW-0812">Transmembrane</keyword>
<keyword id="KW-1133">Transmembrane helix</keyword>
<accession>Q20961</accession>
<organism evidence="4">
    <name type="scientific">Caenorhabditis elegans</name>
    <dbReference type="NCBI Taxonomy" id="6239"/>
    <lineage>
        <taxon>Eukaryota</taxon>
        <taxon>Metazoa</taxon>
        <taxon>Ecdysozoa</taxon>
        <taxon>Nematoda</taxon>
        <taxon>Chromadorea</taxon>
        <taxon>Rhabditida</taxon>
        <taxon>Rhabditina</taxon>
        <taxon>Rhabditomorpha</taxon>
        <taxon>Rhabditoidea</taxon>
        <taxon>Rhabditidae</taxon>
        <taxon>Peloderinae</taxon>
        <taxon>Caenorhabditis</taxon>
    </lineage>
</organism>
<evidence type="ECO:0000255" key="1"/>
<evidence type="ECO:0000269" key="2">
    <source>
    </source>
</evidence>
<evidence type="ECO:0000305" key="3"/>
<evidence type="ECO:0000312" key="4">
    <source>
        <dbReference type="Proteomes" id="UP000001940"/>
    </source>
</evidence>
<evidence type="ECO:0000312" key="5">
    <source>
        <dbReference type="WormBase" id="F58A6.6"/>
    </source>
</evidence>
<reference evidence="4" key="1">
    <citation type="journal article" date="1998" name="Science">
        <title>Genome sequence of the nematode C. elegans: a platform for investigating biology.</title>
        <authorList>
            <consortium name="The C. elegans sequencing consortium"/>
        </authorList>
    </citation>
    <scope>NUCLEOTIDE SEQUENCE [LARGE SCALE GENOMIC DNA]</scope>
    <source>
        <strain evidence="4">Bristol N2</strain>
    </source>
</reference>
<reference evidence="3" key="2">
    <citation type="journal article" date="2017" name="PLoS Biol.">
        <title>Chemosensory and hyperoxia circuits in C. elegans males influence sperm navigational capacity.</title>
        <authorList>
            <person name="Hoang H.D."/>
            <person name="Miller M.A."/>
        </authorList>
    </citation>
    <scope>FUNCTION</scope>
    <scope>SUBCELLULAR LOCATION</scope>
    <scope>TISSUE SPECIFICITY</scope>
    <scope>DISRUPTION PHENOTYPE</scope>
</reference>
<proteinExistence type="evidence at transcript level"/>
<name>SRB16_CAEEL</name>
<protein>
    <recommendedName>
        <fullName evidence="5">Serpentine receptor class beta-16</fullName>
        <shortName evidence="3">Protein srb-16</shortName>
    </recommendedName>
</protein>
<comment type="function">
    <text evidence="2 3">G-protein coupled receptor (Probable). Plays a role in the navigational capacity of sperm and promotes the targeting of sperm derived from males to the fertilization site in the uterus of hermaphrodites (PubMed:28662030).</text>
</comment>
<comment type="subcellular location">
    <subcellularLocation>
        <location evidence="2">Cell membrane</location>
        <topology evidence="1">Multi-pass membrane protein</topology>
    </subcellularLocation>
    <subcellularLocation>
        <location evidence="2">Perikaryon</location>
    </subcellularLocation>
    <subcellularLocation>
        <location evidence="2">Cell projection</location>
        <location evidence="2">Dendrite</location>
    </subcellularLocation>
</comment>
<comment type="tissue specificity">
    <text evidence="2">Expressed throughout the nervous system, in pharyngeal muscle, hermaphrodite vulval muscles and in the male tail (PubMed:28662030). Not expressed in male somatic gonads or sperm (PubMed:28662030).</text>
</comment>
<comment type="disruption phenotype">
    <text evidence="2">Reduced brood size, which is in part due to an abnormal distribution of male-derived sperm in the hermaphrodite uterus following mating, with sperm moving at a reduced velocity, reversing course frequently and accumulating at the spermathecal-uterine valve 1 hour following mating (PubMed:28662030). No visible defects in oogenesis (PubMed:28662030).</text>
</comment>
<comment type="similarity">
    <text evidence="3">Belongs to the nematode receptor-like protein srb family.</text>
</comment>